<feature type="chain" id="PRO_1000048887" description="tRNA modification GTPase MnmE">
    <location>
        <begin position="1"/>
        <end position="458"/>
    </location>
</feature>
<feature type="domain" description="TrmE-type G">
    <location>
        <begin position="224"/>
        <end position="378"/>
    </location>
</feature>
<feature type="binding site" evidence="1">
    <location>
        <position position="26"/>
    </location>
    <ligand>
        <name>(6S)-5-formyl-5,6,7,8-tetrahydrofolate</name>
        <dbReference type="ChEBI" id="CHEBI:57457"/>
    </ligand>
</feature>
<feature type="binding site" evidence="1">
    <location>
        <position position="88"/>
    </location>
    <ligand>
        <name>(6S)-5-formyl-5,6,7,8-tetrahydrofolate</name>
        <dbReference type="ChEBI" id="CHEBI:57457"/>
    </ligand>
</feature>
<feature type="binding site" evidence="1">
    <location>
        <position position="127"/>
    </location>
    <ligand>
        <name>(6S)-5-formyl-5,6,7,8-tetrahydrofolate</name>
        <dbReference type="ChEBI" id="CHEBI:57457"/>
    </ligand>
</feature>
<feature type="binding site" evidence="1">
    <location>
        <begin position="234"/>
        <end position="239"/>
    </location>
    <ligand>
        <name>GTP</name>
        <dbReference type="ChEBI" id="CHEBI:37565"/>
    </ligand>
</feature>
<feature type="binding site" evidence="1">
    <location>
        <position position="234"/>
    </location>
    <ligand>
        <name>K(+)</name>
        <dbReference type="ChEBI" id="CHEBI:29103"/>
    </ligand>
</feature>
<feature type="binding site" evidence="1">
    <location>
        <position position="238"/>
    </location>
    <ligand>
        <name>Mg(2+)</name>
        <dbReference type="ChEBI" id="CHEBI:18420"/>
    </ligand>
</feature>
<feature type="binding site" evidence="1">
    <location>
        <begin position="253"/>
        <end position="259"/>
    </location>
    <ligand>
        <name>GTP</name>
        <dbReference type="ChEBI" id="CHEBI:37565"/>
    </ligand>
</feature>
<feature type="binding site" evidence="1">
    <location>
        <position position="253"/>
    </location>
    <ligand>
        <name>K(+)</name>
        <dbReference type="ChEBI" id="CHEBI:29103"/>
    </ligand>
</feature>
<feature type="binding site" evidence="1">
    <location>
        <position position="255"/>
    </location>
    <ligand>
        <name>K(+)</name>
        <dbReference type="ChEBI" id="CHEBI:29103"/>
    </ligand>
</feature>
<feature type="binding site" evidence="1">
    <location>
        <position position="258"/>
    </location>
    <ligand>
        <name>K(+)</name>
        <dbReference type="ChEBI" id="CHEBI:29103"/>
    </ligand>
</feature>
<feature type="binding site" evidence="1">
    <location>
        <position position="259"/>
    </location>
    <ligand>
        <name>Mg(2+)</name>
        <dbReference type="ChEBI" id="CHEBI:18420"/>
    </ligand>
</feature>
<feature type="binding site" evidence="1">
    <location>
        <begin position="278"/>
        <end position="281"/>
    </location>
    <ligand>
        <name>GTP</name>
        <dbReference type="ChEBI" id="CHEBI:37565"/>
    </ligand>
</feature>
<feature type="binding site" evidence="1">
    <location>
        <position position="458"/>
    </location>
    <ligand>
        <name>(6S)-5-formyl-5,6,7,8-tetrahydrofolate</name>
        <dbReference type="ChEBI" id="CHEBI:57457"/>
    </ligand>
</feature>
<sequence>MSITKEFDTITAISTPLGEGAIGIVRLSGTDALAIAQSVFKGKNLEQVASHTINYGHIIDPKTGTIIDEVMVSVMLAPKTFTRENVVEINTHGGIAVTNEILQLLIRQGARMAEPGEFTKRAFLNGRVDLTQAEAVMDIIRAKTDKAMTIAVKQLDGSLSQLINDTRQEILNTLAQVEVNIDYPEYDDVEEMTTALLREKTQEFQSLLENLLRTAKRGKILREGLSTAIIGRPNVGKSSLLNNLLREDKAIVTDIAGTTRDVIEEYVNIKGVPLKLVDTAGIRETDDLVEQIGVERSKKALQEADLVLLVLNASEKLTDQDRALLNLSQDSNRIILLNKTDLEQKIELEQLPADLIPISVLTNQNINLIEDRINQLFFDNAGLVEQDATYLSNARHISLIEKAVQSLEAVNDGLALGMPVDLLQVDLTRTWEILGEITGDAAPDELITQLFSQFCLGK</sequence>
<organism>
    <name type="scientific">Streptococcus pyogenes serotype M12 (strain MGAS9429)</name>
    <dbReference type="NCBI Taxonomy" id="370551"/>
    <lineage>
        <taxon>Bacteria</taxon>
        <taxon>Bacillati</taxon>
        <taxon>Bacillota</taxon>
        <taxon>Bacilli</taxon>
        <taxon>Lactobacillales</taxon>
        <taxon>Streptococcaceae</taxon>
        <taxon>Streptococcus</taxon>
    </lineage>
</organism>
<evidence type="ECO:0000255" key="1">
    <source>
        <dbReference type="HAMAP-Rule" id="MF_00379"/>
    </source>
</evidence>
<protein>
    <recommendedName>
        <fullName evidence="1">tRNA modification GTPase MnmE</fullName>
        <ecNumber evidence="1">3.6.-.-</ecNumber>
    </recommendedName>
</protein>
<reference key="1">
    <citation type="journal article" date="2006" name="Proc. Natl. Acad. Sci. U.S.A.">
        <title>Molecular genetic anatomy of inter- and intraserotype variation in the human bacterial pathogen group A Streptococcus.</title>
        <authorList>
            <person name="Beres S.B."/>
            <person name="Richter E.W."/>
            <person name="Nagiec M.J."/>
            <person name="Sumby P."/>
            <person name="Porcella S.F."/>
            <person name="DeLeo F.R."/>
            <person name="Musser J.M."/>
        </authorList>
    </citation>
    <scope>NUCLEOTIDE SEQUENCE [LARGE SCALE GENOMIC DNA]</scope>
    <source>
        <strain>MGAS9429</strain>
    </source>
</reference>
<gene>
    <name evidence="1" type="primary">mnmE</name>
    <name evidence="1" type="synonym">trmE</name>
    <name type="ordered locus">MGAS9429_Spy0908</name>
</gene>
<name>MNME_STRPC</name>
<keyword id="KW-0963">Cytoplasm</keyword>
<keyword id="KW-0342">GTP-binding</keyword>
<keyword id="KW-0378">Hydrolase</keyword>
<keyword id="KW-0460">Magnesium</keyword>
<keyword id="KW-0479">Metal-binding</keyword>
<keyword id="KW-0547">Nucleotide-binding</keyword>
<keyword id="KW-0630">Potassium</keyword>
<keyword id="KW-0819">tRNA processing</keyword>
<dbReference type="EC" id="3.6.-.-" evidence="1"/>
<dbReference type="EMBL" id="CP000259">
    <property type="protein sequence ID" value="ABF32096.1"/>
    <property type="molecule type" value="Genomic_DNA"/>
</dbReference>
<dbReference type="RefSeq" id="WP_002989919.1">
    <property type="nucleotide sequence ID" value="NC_008021.1"/>
</dbReference>
<dbReference type="SMR" id="Q1JLX3"/>
<dbReference type="KEGG" id="spk:MGAS9429_Spy0908"/>
<dbReference type="HOGENOM" id="CLU_019624_4_1_9"/>
<dbReference type="Proteomes" id="UP000002433">
    <property type="component" value="Chromosome"/>
</dbReference>
<dbReference type="GO" id="GO:0005829">
    <property type="term" value="C:cytosol"/>
    <property type="evidence" value="ECO:0007669"/>
    <property type="project" value="TreeGrafter"/>
</dbReference>
<dbReference type="GO" id="GO:0005525">
    <property type="term" value="F:GTP binding"/>
    <property type="evidence" value="ECO:0007669"/>
    <property type="project" value="UniProtKB-UniRule"/>
</dbReference>
<dbReference type="GO" id="GO:0003924">
    <property type="term" value="F:GTPase activity"/>
    <property type="evidence" value="ECO:0007669"/>
    <property type="project" value="UniProtKB-UniRule"/>
</dbReference>
<dbReference type="GO" id="GO:0046872">
    <property type="term" value="F:metal ion binding"/>
    <property type="evidence" value="ECO:0007669"/>
    <property type="project" value="UniProtKB-KW"/>
</dbReference>
<dbReference type="GO" id="GO:0030488">
    <property type="term" value="P:tRNA methylation"/>
    <property type="evidence" value="ECO:0007669"/>
    <property type="project" value="TreeGrafter"/>
</dbReference>
<dbReference type="GO" id="GO:0002098">
    <property type="term" value="P:tRNA wobble uridine modification"/>
    <property type="evidence" value="ECO:0007669"/>
    <property type="project" value="TreeGrafter"/>
</dbReference>
<dbReference type="CDD" id="cd04164">
    <property type="entry name" value="trmE"/>
    <property type="match status" value="1"/>
</dbReference>
<dbReference type="CDD" id="cd14858">
    <property type="entry name" value="TrmE_N"/>
    <property type="match status" value="1"/>
</dbReference>
<dbReference type="FunFam" id="3.30.1360.120:FF:000003">
    <property type="entry name" value="tRNA modification GTPase MnmE"/>
    <property type="match status" value="1"/>
</dbReference>
<dbReference type="FunFam" id="3.40.50.300:FF:000494">
    <property type="entry name" value="tRNA modification GTPase MnmE"/>
    <property type="match status" value="1"/>
</dbReference>
<dbReference type="Gene3D" id="3.40.50.300">
    <property type="entry name" value="P-loop containing nucleotide triphosphate hydrolases"/>
    <property type="match status" value="1"/>
</dbReference>
<dbReference type="Gene3D" id="3.30.1360.120">
    <property type="entry name" value="Probable tRNA modification gtpase trme, domain 1"/>
    <property type="match status" value="1"/>
</dbReference>
<dbReference type="Gene3D" id="1.20.120.430">
    <property type="entry name" value="tRNA modification GTPase MnmE domain 2"/>
    <property type="match status" value="1"/>
</dbReference>
<dbReference type="HAMAP" id="MF_00379">
    <property type="entry name" value="GTPase_MnmE"/>
    <property type="match status" value="1"/>
</dbReference>
<dbReference type="InterPro" id="IPR031168">
    <property type="entry name" value="G_TrmE"/>
</dbReference>
<dbReference type="InterPro" id="IPR006073">
    <property type="entry name" value="GTP-bd"/>
</dbReference>
<dbReference type="InterPro" id="IPR018948">
    <property type="entry name" value="GTP-bd_TrmE_N"/>
</dbReference>
<dbReference type="InterPro" id="IPR004520">
    <property type="entry name" value="GTPase_MnmE"/>
</dbReference>
<dbReference type="InterPro" id="IPR027368">
    <property type="entry name" value="MnmE_dom2"/>
</dbReference>
<dbReference type="InterPro" id="IPR025867">
    <property type="entry name" value="MnmE_helical"/>
</dbReference>
<dbReference type="InterPro" id="IPR027417">
    <property type="entry name" value="P-loop_NTPase"/>
</dbReference>
<dbReference type="InterPro" id="IPR005225">
    <property type="entry name" value="Small_GTP-bd"/>
</dbReference>
<dbReference type="InterPro" id="IPR027266">
    <property type="entry name" value="TrmE/GcvT_dom1"/>
</dbReference>
<dbReference type="NCBIfam" id="TIGR00450">
    <property type="entry name" value="mnmE_trmE_thdF"/>
    <property type="match status" value="1"/>
</dbReference>
<dbReference type="NCBIfam" id="NF003661">
    <property type="entry name" value="PRK05291.1-3"/>
    <property type="match status" value="1"/>
</dbReference>
<dbReference type="NCBIfam" id="TIGR00231">
    <property type="entry name" value="small_GTP"/>
    <property type="match status" value="1"/>
</dbReference>
<dbReference type="PANTHER" id="PTHR42714">
    <property type="entry name" value="TRNA MODIFICATION GTPASE GTPBP3"/>
    <property type="match status" value="1"/>
</dbReference>
<dbReference type="PANTHER" id="PTHR42714:SF2">
    <property type="entry name" value="TRNA MODIFICATION GTPASE GTPBP3, MITOCHONDRIAL"/>
    <property type="match status" value="1"/>
</dbReference>
<dbReference type="Pfam" id="PF01926">
    <property type="entry name" value="MMR_HSR1"/>
    <property type="match status" value="1"/>
</dbReference>
<dbReference type="Pfam" id="PF12631">
    <property type="entry name" value="MnmE_helical"/>
    <property type="match status" value="1"/>
</dbReference>
<dbReference type="Pfam" id="PF10396">
    <property type="entry name" value="TrmE_N"/>
    <property type="match status" value="1"/>
</dbReference>
<dbReference type="SUPFAM" id="SSF52540">
    <property type="entry name" value="P-loop containing nucleoside triphosphate hydrolases"/>
    <property type="match status" value="1"/>
</dbReference>
<dbReference type="SUPFAM" id="SSF116878">
    <property type="entry name" value="TrmE connector domain"/>
    <property type="match status" value="1"/>
</dbReference>
<dbReference type="PROSITE" id="PS51709">
    <property type="entry name" value="G_TRME"/>
    <property type="match status" value="1"/>
</dbReference>
<proteinExistence type="inferred from homology"/>
<comment type="function">
    <text evidence="1">Exhibits a very high intrinsic GTPase hydrolysis rate. Involved in the addition of a carboxymethylaminomethyl (cmnm) group at the wobble position (U34) of certain tRNAs, forming tRNA-cmnm(5)s(2)U34.</text>
</comment>
<comment type="cofactor">
    <cofactor evidence="1">
        <name>K(+)</name>
        <dbReference type="ChEBI" id="CHEBI:29103"/>
    </cofactor>
    <text evidence="1">Binds 1 potassium ion per subunit.</text>
</comment>
<comment type="subunit">
    <text evidence="1">Homodimer. Heterotetramer of two MnmE and two MnmG subunits.</text>
</comment>
<comment type="subcellular location">
    <subcellularLocation>
        <location evidence="1">Cytoplasm</location>
    </subcellularLocation>
</comment>
<comment type="similarity">
    <text evidence="1">Belongs to the TRAFAC class TrmE-Era-EngA-EngB-Septin-like GTPase superfamily. TrmE GTPase family.</text>
</comment>
<accession>Q1JLX3</accession>